<evidence type="ECO:0000255" key="1">
    <source>
        <dbReference type="HAMAP-Rule" id="MF_00607"/>
    </source>
</evidence>
<evidence type="ECO:0000256" key="2">
    <source>
        <dbReference type="SAM" id="MobiDB-lite"/>
    </source>
</evidence>
<protein>
    <recommendedName>
        <fullName evidence="1">Ribosomal RNA small subunit methyltransferase A</fullName>
        <ecNumber evidence="1">2.1.1.182</ecNumber>
    </recommendedName>
    <alternativeName>
        <fullName evidence="1">16S rRNA (adenine(1518)-N(6)/adenine(1519)-N(6))-dimethyltransferase</fullName>
    </alternativeName>
    <alternativeName>
        <fullName evidence="1">16S rRNA dimethyladenosine transferase</fullName>
    </alternativeName>
    <alternativeName>
        <fullName evidence="1">16S rRNA dimethylase</fullName>
    </alternativeName>
    <alternativeName>
        <fullName evidence="1">S-adenosylmethionine-6-N', N'-adenosyl(rRNA) dimethyltransferase</fullName>
    </alternativeName>
</protein>
<sequence>MNDKKHLGHQAKKRFGQNFLHNDAVISDIVDAINPEPGENLIEIGPGLGALTEPVIERAGKLSVVELDRDLAHRLRHHPFLAKDLTIYETDALKFDFSELATEEQPLRIFGNLPYNISTPLIFHLLTFKDKVKDMHFMLQKEVVERMAAGPHCKAYGRLSIMTQYQCQVFPVMEIGPEAFKPAPKVDSAIVRLIPHAHIENPVKDINALNTVCLAAFNQRRKTIRNTFKKLITEAQLAELNIDANLRPENLSLDEYKKLADFIVDNPPEAAPVKEKRRMAKNKMTEPANNNLNENSAPEVD</sequence>
<reference key="1">
    <citation type="journal article" date="2005" name="Proc. Natl. Acad. Sci. U.S.A.">
        <title>The psychrophilic lifestyle as revealed by the genome sequence of Colwellia psychrerythraea 34H through genomic and proteomic analyses.</title>
        <authorList>
            <person name="Methe B.A."/>
            <person name="Nelson K.E."/>
            <person name="Deming J.W."/>
            <person name="Momen B."/>
            <person name="Melamud E."/>
            <person name="Zhang X."/>
            <person name="Moult J."/>
            <person name="Madupu R."/>
            <person name="Nelson W.C."/>
            <person name="Dodson R.J."/>
            <person name="Brinkac L.M."/>
            <person name="Daugherty S.C."/>
            <person name="Durkin A.S."/>
            <person name="DeBoy R.T."/>
            <person name="Kolonay J.F."/>
            <person name="Sullivan S.A."/>
            <person name="Zhou L."/>
            <person name="Davidsen T.M."/>
            <person name="Wu M."/>
            <person name="Huston A.L."/>
            <person name="Lewis M."/>
            <person name="Weaver B."/>
            <person name="Weidman J.F."/>
            <person name="Khouri H."/>
            <person name="Utterback T.R."/>
            <person name="Feldblyum T.V."/>
            <person name="Fraser C.M."/>
        </authorList>
    </citation>
    <scope>NUCLEOTIDE SEQUENCE [LARGE SCALE GENOMIC DNA]</scope>
    <source>
        <strain>34H / ATCC BAA-681</strain>
    </source>
</reference>
<name>RSMA_COLP3</name>
<organism>
    <name type="scientific">Colwellia psychrerythraea (strain 34H / ATCC BAA-681)</name>
    <name type="common">Vibrio psychroerythus</name>
    <dbReference type="NCBI Taxonomy" id="167879"/>
    <lineage>
        <taxon>Bacteria</taxon>
        <taxon>Pseudomonadati</taxon>
        <taxon>Pseudomonadota</taxon>
        <taxon>Gammaproteobacteria</taxon>
        <taxon>Alteromonadales</taxon>
        <taxon>Colwelliaceae</taxon>
        <taxon>Colwellia</taxon>
    </lineage>
</organism>
<gene>
    <name evidence="1" type="primary">rsmA</name>
    <name evidence="1" type="synonym">ksgA</name>
    <name type="ordered locus">CPS_4526</name>
</gene>
<dbReference type="EC" id="2.1.1.182" evidence="1"/>
<dbReference type="EMBL" id="CP000083">
    <property type="protein sequence ID" value="AAZ26037.1"/>
    <property type="molecule type" value="Genomic_DNA"/>
</dbReference>
<dbReference type="RefSeq" id="WP_011045255.1">
    <property type="nucleotide sequence ID" value="NC_003910.7"/>
</dbReference>
<dbReference type="SMR" id="Q47VJ8"/>
<dbReference type="STRING" id="167879.CPS_4526"/>
<dbReference type="KEGG" id="cps:CPS_4526"/>
<dbReference type="eggNOG" id="COG0030">
    <property type="taxonomic scope" value="Bacteria"/>
</dbReference>
<dbReference type="HOGENOM" id="CLU_041220_0_1_6"/>
<dbReference type="Proteomes" id="UP000000547">
    <property type="component" value="Chromosome"/>
</dbReference>
<dbReference type="GO" id="GO:0005829">
    <property type="term" value="C:cytosol"/>
    <property type="evidence" value="ECO:0007669"/>
    <property type="project" value="TreeGrafter"/>
</dbReference>
<dbReference type="GO" id="GO:0052908">
    <property type="term" value="F:16S rRNA (adenine(1518)-N(6)/adenine(1519)-N(6))-dimethyltransferase activity"/>
    <property type="evidence" value="ECO:0007669"/>
    <property type="project" value="UniProtKB-EC"/>
</dbReference>
<dbReference type="GO" id="GO:0003723">
    <property type="term" value="F:RNA binding"/>
    <property type="evidence" value="ECO:0007669"/>
    <property type="project" value="UniProtKB-KW"/>
</dbReference>
<dbReference type="FunFam" id="1.10.8.100:FF:000001">
    <property type="entry name" value="Ribosomal RNA small subunit methyltransferase A"/>
    <property type="match status" value="1"/>
</dbReference>
<dbReference type="FunFam" id="3.40.50.150:FF:000006">
    <property type="entry name" value="Ribosomal RNA small subunit methyltransferase A"/>
    <property type="match status" value="1"/>
</dbReference>
<dbReference type="Gene3D" id="1.10.8.100">
    <property type="entry name" value="Ribosomal RNA adenine dimethylase-like, domain 2"/>
    <property type="match status" value="1"/>
</dbReference>
<dbReference type="Gene3D" id="3.40.50.150">
    <property type="entry name" value="Vaccinia Virus protein VP39"/>
    <property type="match status" value="1"/>
</dbReference>
<dbReference type="HAMAP" id="MF_00607">
    <property type="entry name" value="16SrRNA_methyltr_A"/>
    <property type="match status" value="1"/>
</dbReference>
<dbReference type="InterPro" id="IPR001737">
    <property type="entry name" value="KsgA/Erm"/>
</dbReference>
<dbReference type="InterPro" id="IPR023165">
    <property type="entry name" value="rRNA_Ade_diMease-like_C"/>
</dbReference>
<dbReference type="InterPro" id="IPR020596">
    <property type="entry name" value="rRNA_Ade_Mease_Trfase_CS"/>
</dbReference>
<dbReference type="InterPro" id="IPR020598">
    <property type="entry name" value="rRNA_Ade_methylase_Trfase_N"/>
</dbReference>
<dbReference type="InterPro" id="IPR011530">
    <property type="entry name" value="rRNA_adenine_dimethylase"/>
</dbReference>
<dbReference type="InterPro" id="IPR029063">
    <property type="entry name" value="SAM-dependent_MTases_sf"/>
</dbReference>
<dbReference type="NCBIfam" id="TIGR00755">
    <property type="entry name" value="ksgA"/>
    <property type="match status" value="1"/>
</dbReference>
<dbReference type="PANTHER" id="PTHR11727">
    <property type="entry name" value="DIMETHYLADENOSINE TRANSFERASE"/>
    <property type="match status" value="1"/>
</dbReference>
<dbReference type="PANTHER" id="PTHR11727:SF7">
    <property type="entry name" value="DIMETHYLADENOSINE TRANSFERASE-RELATED"/>
    <property type="match status" value="1"/>
</dbReference>
<dbReference type="Pfam" id="PF00398">
    <property type="entry name" value="RrnaAD"/>
    <property type="match status" value="1"/>
</dbReference>
<dbReference type="SMART" id="SM00650">
    <property type="entry name" value="rADc"/>
    <property type="match status" value="1"/>
</dbReference>
<dbReference type="SUPFAM" id="SSF53335">
    <property type="entry name" value="S-adenosyl-L-methionine-dependent methyltransferases"/>
    <property type="match status" value="1"/>
</dbReference>
<dbReference type="PROSITE" id="PS01131">
    <property type="entry name" value="RRNA_A_DIMETH"/>
    <property type="match status" value="1"/>
</dbReference>
<dbReference type="PROSITE" id="PS51689">
    <property type="entry name" value="SAM_RNA_A_N6_MT"/>
    <property type="match status" value="1"/>
</dbReference>
<accession>Q47VJ8</accession>
<proteinExistence type="inferred from homology"/>
<feature type="chain" id="PRO_0000257277" description="Ribosomal RNA small subunit methyltransferase A">
    <location>
        <begin position="1"/>
        <end position="301"/>
    </location>
</feature>
<feature type="region of interest" description="Disordered" evidence="2">
    <location>
        <begin position="267"/>
        <end position="301"/>
    </location>
</feature>
<feature type="compositionally biased region" description="Polar residues" evidence="2">
    <location>
        <begin position="287"/>
        <end position="301"/>
    </location>
</feature>
<feature type="binding site" evidence="1">
    <location>
        <position position="18"/>
    </location>
    <ligand>
        <name>S-adenosyl-L-methionine</name>
        <dbReference type="ChEBI" id="CHEBI:59789"/>
    </ligand>
</feature>
<feature type="binding site" evidence="1">
    <location>
        <position position="20"/>
    </location>
    <ligand>
        <name>S-adenosyl-L-methionine</name>
        <dbReference type="ChEBI" id="CHEBI:59789"/>
    </ligand>
</feature>
<feature type="binding site" evidence="1">
    <location>
        <position position="45"/>
    </location>
    <ligand>
        <name>S-adenosyl-L-methionine</name>
        <dbReference type="ChEBI" id="CHEBI:59789"/>
    </ligand>
</feature>
<feature type="binding site" evidence="1">
    <location>
        <position position="66"/>
    </location>
    <ligand>
        <name>S-adenosyl-L-methionine</name>
        <dbReference type="ChEBI" id="CHEBI:59789"/>
    </ligand>
</feature>
<feature type="binding site" evidence="1">
    <location>
        <position position="91"/>
    </location>
    <ligand>
        <name>S-adenosyl-L-methionine</name>
        <dbReference type="ChEBI" id="CHEBI:59789"/>
    </ligand>
</feature>
<feature type="binding site" evidence="1">
    <location>
        <position position="112"/>
    </location>
    <ligand>
        <name>S-adenosyl-L-methionine</name>
        <dbReference type="ChEBI" id="CHEBI:59789"/>
    </ligand>
</feature>
<keyword id="KW-0963">Cytoplasm</keyword>
<keyword id="KW-0489">Methyltransferase</keyword>
<keyword id="KW-0694">RNA-binding</keyword>
<keyword id="KW-0698">rRNA processing</keyword>
<keyword id="KW-0949">S-adenosyl-L-methionine</keyword>
<keyword id="KW-0808">Transferase</keyword>
<comment type="function">
    <text evidence="1">Specifically dimethylates two adjacent adenosines (A1518 and A1519) in the loop of a conserved hairpin near the 3'-end of 16S rRNA in the 30S particle. May play a critical role in biogenesis of 30S subunits.</text>
</comment>
<comment type="catalytic activity">
    <reaction evidence="1">
        <text>adenosine(1518)/adenosine(1519) in 16S rRNA + 4 S-adenosyl-L-methionine = N(6)-dimethyladenosine(1518)/N(6)-dimethyladenosine(1519) in 16S rRNA + 4 S-adenosyl-L-homocysteine + 4 H(+)</text>
        <dbReference type="Rhea" id="RHEA:19609"/>
        <dbReference type="Rhea" id="RHEA-COMP:10232"/>
        <dbReference type="Rhea" id="RHEA-COMP:10233"/>
        <dbReference type="ChEBI" id="CHEBI:15378"/>
        <dbReference type="ChEBI" id="CHEBI:57856"/>
        <dbReference type="ChEBI" id="CHEBI:59789"/>
        <dbReference type="ChEBI" id="CHEBI:74411"/>
        <dbReference type="ChEBI" id="CHEBI:74493"/>
        <dbReference type="EC" id="2.1.1.182"/>
    </reaction>
</comment>
<comment type="subcellular location">
    <subcellularLocation>
        <location evidence="1">Cytoplasm</location>
    </subcellularLocation>
</comment>
<comment type="similarity">
    <text evidence="1">Belongs to the class I-like SAM-binding methyltransferase superfamily. rRNA adenine N(6)-methyltransferase family. RsmA subfamily.</text>
</comment>